<reference key="1">
    <citation type="journal article" date="1999" name="J. Biol. Chem.">
        <title>Receptor-independent activators of heterotrimeric G-protein signaling pathways.</title>
        <authorList>
            <person name="Takesono A."/>
            <person name="Cismowski M.J."/>
            <person name="Ribas C."/>
            <person name="Bernard M."/>
            <person name="Chung P."/>
            <person name="Hazard S. III"/>
            <person name="Duzic E."/>
            <person name="Lanier S.M."/>
        </authorList>
    </citation>
    <scope>NUCLEOTIDE SEQUENCE [MRNA] (ISOFORM 4)</scope>
    <scope>FUNCTION</scope>
    <scope>INTERACTION WITH GNAI2 AND GNAI3</scope>
    <scope>MUTAGENESIS OF PHE-631; GLN-639 AND ARG-647</scope>
    <source>
        <strain>Sprague-Dawley</strain>
        <tissue>Brain</tissue>
    </source>
</reference>
<reference key="2">
    <citation type="submission" date="2002-07" db="EMBL/GenBank/DDBJ databases">
        <title>cDNA clones of human proteins involved in signal transduction sequenced by the Guthrie cDNA resource center (www.cdna.org).</title>
        <authorList>
            <person name="Puhl H.L. III"/>
            <person name="Ikeda S.R."/>
            <person name="Aronstam R.S."/>
        </authorList>
    </citation>
    <scope>NUCLEOTIDE SEQUENCE [LARGE SCALE MRNA] (ISOFORM 2)</scope>
    <source>
        <strain>Sprague-Dawley</strain>
        <tissue>Brain</tissue>
    </source>
</reference>
<reference key="3">
    <citation type="journal article" date="2004" name="Genome Res.">
        <title>The status, quality, and expansion of the NIH full-length cDNA project: the Mammalian Gene Collection (MGC).</title>
        <authorList>
            <consortium name="The MGC Project Team"/>
        </authorList>
    </citation>
    <scope>NUCLEOTIDE SEQUENCE [LARGE SCALE MRNA] (ISOFORM 2)</scope>
    <source>
        <strain>Brown Norway</strain>
        <tissue>Heart</tissue>
    </source>
</reference>
<reference key="4">
    <citation type="submission" date="2003-04" db="EMBL/GenBank/DDBJ databases">
        <title>Amgen rat EST program.</title>
        <authorList>
            <consortium name="Amgen EST program"/>
        </authorList>
    </citation>
    <scope>NUCLEOTIDE SEQUENCE [LARGE SCALE MRNA] OF 1-168 (ISOFORM 1)</scope>
    <source>
        <tissue>Spinal ganglion</tissue>
    </source>
</reference>
<reference key="5">
    <citation type="journal article" date="2000" name="Proc. Natl. Acad. Sci. U.S.A.">
        <title>Activator of G protein signaling 3 is a guanine dissociation inhibitor for Galpha i subunits.</title>
        <authorList>
            <person name="de Vries L."/>
            <person name="Fischer T."/>
            <person name="Tronchere H."/>
            <person name="Brothers G.M."/>
            <person name="Strockbine B."/>
            <person name="Siderovski D.P."/>
            <person name="Farquhar M.G."/>
        </authorList>
    </citation>
    <scope>FUNCTION</scope>
    <scope>INTERACTION WITH GNAI1; GNAI2; GNAI3 AND GNAO1</scope>
    <scope>TISSUE SPECIFICITY</scope>
    <scope>SUBCELLULAR LOCATION</scope>
</reference>
<reference key="6">
    <citation type="journal article" date="2001" name="J. Biol. Chem.">
        <title>Selective interaction of AGS3 with G-proteins and the influence of AGS3 on the activation state of G-proteins.</title>
        <authorList>
            <person name="Bernard M.L."/>
            <person name="Peterson Y.K."/>
            <person name="Chung P."/>
            <person name="Jourdan J."/>
            <person name="Lanier S.M."/>
        </authorList>
    </citation>
    <scope>FUNCTION</scope>
    <scope>SUBCELLULAR LOCATION</scope>
    <scope>INTERACTION WITH GNAI1; GNAI2 AND GNAI3</scope>
</reference>
<reference key="7">
    <citation type="journal article" date="2001" name="J. Biol. Chem.">
        <title>Identification of a truncated form of the G-protein regulator AGS3 in heart that lacks the tetratricopeptide repeat domains.</title>
        <authorList>
            <person name="Pizzinat N."/>
            <person name="Takesono A."/>
            <person name="Lanier S.M."/>
        </authorList>
    </citation>
    <scope>ALTERNATIVE SPLICING (ISOFORMS 2; 3 AND 4)</scope>
    <scope>TISSUE SPECIFICITY</scope>
    <scope>SUBCELLULAR LOCATION</scope>
</reference>
<reference key="8">
    <citation type="journal article" date="2002" name="J. Biol. Chem.">
        <title>Expression analysis and subcellular distribution of the two G-protein regulators AGS3 and LGN indicate distinct functionality. Localization of LGN to the midbody during cytokinesis.</title>
        <authorList>
            <person name="Blumer J.B."/>
            <person name="Chandler L.J."/>
            <person name="Lanier S.M."/>
        </authorList>
    </citation>
    <scope>TISSUE SPECIFICITY</scope>
    <scope>DEVELOPMENTAL STAGE</scope>
    <scope>SUBCELLULAR LOCATION</scope>
</reference>
<reference key="9">
    <citation type="journal article" date="2003" name="Biochemistry">
        <title>Influence of cytosolic AGS3 on receptor-G protein coupling.</title>
        <authorList>
            <person name="Ma H."/>
            <person name="Peterson Y.K."/>
            <person name="Bernard M.L."/>
            <person name="Lanier S.M."/>
            <person name="Graber S.G."/>
        </authorList>
    </citation>
    <scope>FUNCTION</scope>
</reference>
<reference key="10">
    <citation type="journal article" date="2003" name="J. Biol. Chem.">
        <title>Interaction of activator of G-protein signaling 3 (AGS3) with LKB1, a serine/threonine kinase involved in cell polarity and cell cycle progression: phosphorylation of the G-protein regulatory (GPR) motif as a regulatory mechanism for the interaction of GPR motifs with Gi alpha.</title>
        <authorList>
            <person name="Blumer J.B."/>
            <person name="Bernard M.L."/>
            <person name="Peterson Y.K."/>
            <person name="Nezu J."/>
            <person name="Chung P."/>
            <person name="Dunican D.J."/>
            <person name="Knoblich J.A."/>
            <person name="Lanier S.M."/>
        </authorList>
    </citation>
    <scope>INTERACTION WITH STK11/LKB1 AND MACF1</scope>
</reference>
<reference key="11">
    <citation type="journal article" date="2004" name="J. Biol. Chem.">
        <title>AGS3 and signal integration by Galpha(s)- and Galpha(i)-coupled receptors: AGS3 blocks the sensitization of adenylyl cyclase following prolonged stimulation of a Galpha(i)-coupled receptor by influencing processing of Galpha(i).</title>
        <authorList>
            <person name="Sato M."/>
            <person name="Gettys T.W."/>
            <person name="Lanier S.M."/>
        </authorList>
    </citation>
    <scope>FUNCTION</scope>
    <scope>MUTAGENESIS OF ISOFORM 2</scope>
</reference>
<reference key="12">
    <citation type="journal article" date="2004" name="Neuron">
        <title>Activator of G protein signaling 3: a gatekeeper of cocaine sensitization and drug seeking.</title>
        <authorList>
            <person name="Bowers M.S."/>
            <person name="McFarland K."/>
            <person name="Lake R.W."/>
            <person name="Peterson Y.K."/>
            <person name="Lapish C.C."/>
            <person name="Gregory M.L."/>
            <person name="Lanier S.M."/>
            <person name="Kalivas P.W."/>
        </authorList>
    </citation>
    <scope>FUNCTION</scope>
    <scope>INDUCTION</scope>
</reference>
<reference key="13">
    <citation type="journal article" date="2005" name="Proc. Natl. Acad. Sci. U.S.A.">
        <title>Activator of G protein signaling 3 regulates opiate activation of protein kinase A signaling and relapse of heroin-seeking behavior.</title>
        <authorList>
            <person name="Yao L."/>
            <person name="McFarland K."/>
            <person name="Fan P."/>
            <person name="Jiang Z."/>
            <person name="Inoue Y."/>
            <person name="Diamond I."/>
        </authorList>
    </citation>
    <scope>FUNCTION</scope>
</reference>
<reference key="14">
    <citation type="journal article" date="2006" name="Neurosci. Lett.">
        <title>Activator of G protein signaling type 3 mRNA is widely distributed in the rat brain and is particularly abundant in the subventricular zone-olfactory bulb system of neural precursor cell proliferation, migration and differentiation.</title>
        <authorList>
            <person name="Taymans J.-M."/>
            <person name="Kia H.K."/>
            <person name="Langlois X."/>
        </authorList>
    </citation>
    <scope>TISSUE SPECIFICITY</scope>
</reference>
<reference key="15">
    <citation type="journal article" date="2012" name="Nat. Commun.">
        <title>Quantitative maps of protein phosphorylation sites across 14 different rat organs and tissues.</title>
        <authorList>
            <person name="Lundby A."/>
            <person name="Secher A."/>
            <person name="Lage K."/>
            <person name="Nordsborg N.B."/>
            <person name="Dmytriyev A."/>
            <person name="Lundby C."/>
            <person name="Olsen J.V."/>
        </authorList>
    </citation>
    <scope>PHOSPHORYLATION [LARGE SCALE ANALYSIS] AT SER-490; SER-543; SER-567 AND SER-653</scope>
    <scope>IDENTIFICATION BY MASS SPECTROMETRY [LARGE SCALE ANALYSIS]</scope>
</reference>
<protein>
    <recommendedName>
        <fullName>G-protein-signaling modulator 1</fullName>
    </recommendedName>
    <alternativeName>
        <fullName>Activator of G-protein signaling 3</fullName>
    </alternativeName>
</protein>
<proteinExistence type="evidence at protein level"/>
<organism>
    <name type="scientific">Rattus norvegicus</name>
    <name type="common">Rat</name>
    <dbReference type="NCBI Taxonomy" id="10116"/>
    <lineage>
        <taxon>Eukaryota</taxon>
        <taxon>Metazoa</taxon>
        <taxon>Chordata</taxon>
        <taxon>Craniata</taxon>
        <taxon>Vertebrata</taxon>
        <taxon>Euteleostomi</taxon>
        <taxon>Mammalia</taxon>
        <taxon>Eutheria</taxon>
        <taxon>Euarchontoglires</taxon>
        <taxon>Glires</taxon>
        <taxon>Rodentia</taxon>
        <taxon>Myomorpha</taxon>
        <taxon>Muroidea</taxon>
        <taxon>Muridae</taxon>
        <taxon>Murinae</taxon>
        <taxon>Rattus</taxon>
    </lineage>
</organism>
<feature type="chain" id="PRO_0000252404" description="G-protein-signaling modulator 1">
    <location>
        <begin position="1"/>
        <end position="673"/>
    </location>
</feature>
<feature type="repeat" description="TPR 1">
    <location>
        <begin position="28"/>
        <end position="61"/>
    </location>
</feature>
<feature type="repeat" description="TPR 2">
    <location>
        <begin position="66"/>
        <end position="99"/>
    </location>
</feature>
<feature type="repeat" description="TPR 3">
    <location>
        <begin position="106"/>
        <end position="139"/>
    </location>
</feature>
<feature type="repeat" description="TPR 4">
    <location>
        <begin position="146"/>
        <end position="178"/>
    </location>
</feature>
<feature type="repeat" description="TPR 5">
    <location>
        <begin position="180"/>
        <end position="199"/>
    </location>
</feature>
<feature type="repeat" description="TPR 6">
    <location>
        <begin position="206"/>
        <end position="239"/>
    </location>
</feature>
<feature type="repeat" description="TPR 7">
    <location>
        <begin position="246"/>
        <end position="279"/>
    </location>
</feature>
<feature type="repeat" description="TPR 8">
    <location>
        <begin position="286"/>
        <end position="319"/>
    </location>
</feature>
<feature type="repeat" description="TPR 9">
    <location>
        <begin position="326"/>
        <end position="359"/>
    </location>
</feature>
<feature type="domain" description="GoLoco 1" evidence="4">
    <location>
        <begin position="493"/>
        <end position="515"/>
    </location>
</feature>
<feature type="domain" description="GoLoco 2" evidence="4">
    <location>
        <begin position="546"/>
        <end position="568"/>
    </location>
</feature>
<feature type="domain" description="GoLoco 3" evidence="4">
    <location>
        <begin position="594"/>
        <end position="616"/>
    </location>
</feature>
<feature type="domain" description="GoLoco 4" evidence="4">
    <location>
        <begin position="628"/>
        <end position="650"/>
    </location>
</feature>
<feature type="region of interest" description="Mediates association with membranes">
    <location>
        <begin position="1"/>
        <end position="507"/>
    </location>
</feature>
<feature type="region of interest" description="Interaction with STK11/LKB1">
    <location>
        <begin position="361"/>
        <end position="485"/>
    </location>
</feature>
<feature type="region of interest" description="Disordered" evidence="5">
    <location>
        <begin position="420"/>
        <end position="477"/>
    </location>
</feature>
<feature type="region of interest" description="Disordered" evidence="5">
    <location>
        <begin position="510"/>
        <end position="544"/>
    </location>
</feature>
<feature type="region of interest" description="Disordered" evidence="5">
    <location>
        <begin position="609"/>
        <end position="628"/>
    </location>
</feature>
<feature type="region of interest" description="Disordered" evidence="5">
    <location>
        <begin position="645"/>
        <end position="673"/>
    </location>
</feature>
<feature type="compositionally biased region" description="Basic and acidic residues" evidence="5">
    <location>
        <begin position="420"/>
        <end position="439"/>
    </location>
</feature>
<feature type="compositionally biased region" description="Basic and acidic residues" evidence="5">
    <location>
        <begin position="451"/>
        <end position="467"/>
    </location>
</feature>
<feature type="compositionally biased region" description="Low complexity" evidence="5">
    <location>
        <begin position="516"/>
        <end position="530"/>
    </location>
</feature>
<feature type="modified residue" description="Phosphoserine" evidence="3">
    <location>
        <position position="410"/>
    </location>
</feature>
<feature type="modified residue" description="Omega-N-methylarginine" evidence="2">
    <location>
        <position position="418"/>
    </location>
</feature>
<feature type="modified residue" description="Phosphoserine" evidence="3">
    <location>
        <position position="442"/>
    </location>
</feature>
<feature type="modified residue" description="Phosphoserine" evidence="3">
    <location>
        <position position="467"/>
    </location>
</feature>
<feature type="modified residue" description="Phosphoserine" evidence="3">
    <location>
        <position position="469"/>
    </location>
</feature>
<feature type="modified residue" description="Phosphoserine" evidence="21">
    <location>
        <position position="490"/>
    </location>
</feature>
<feature type="modified residue" description="Phosphoserine" evidence="3">
    <location>
        <position position="491"/>
    </location>
</feature>
<feature type="modified residue" description="Phosphoserine" evidence="21">
    <location>
        <position position="543"/>
    </location>
</feature>
<feature type="modified residue" description="Phosphoserine" evidence="21">
    <location>
        <position position="567"/>
    </location>
</feature>
<feature type="modified residue" description="Phosphoserine" evidence="21">
    <location>
        <position position="653"/>
    </location>
</feature>
<feature type="splice variant" id="VSP_039034" description="In isoform 2." evidence="18 19">
    <location>
        <begin position="1"/>
        <end position="507"/>
    </location>
</feature>
<feature type="splice variant" id="VSP_039035" description="In isoform 3." evidence="20">
    <location>
        <begin position="1"/>
        <end position="446"/>
    </location>
</feature>
<feature type="splice variant" id="VSP_039036" description="In isoform 4." evidence="17">
    <location>
        <begin position="1"/>
        <end position="23"/>
    </location>
</feature>
<feature type="mutagenesis site" description="Loss of interaction with GNAI2 and GNAI3." evidence="6">
    <original>F</original>
    <variation>R</variation>
    <location>
        <position position="631"/>
    </location>
</feature>
<feature type="mutagenesis site" description="Loss of interaction with GNAI2 and GNAI3." evidence="6">
    <original>Q</original>
    <variation>A</variation>
    <location>
        <position position="639"/>
    </location>
</feature>
<feature type="mutagenesis site" description="Loss of interaction with GNAI2 and GNAI3." evidence="6">
    <original>R</original>
    <variation>F</variation>
    <location>
        <position position="647"/>
    </location>
</feature>
<evidence type="ECO:0000250" key="1"/>
<evidence type="ECO:0000250" key="2">
    <source>
        <dbReference type="UniProtKB" id="Q6IR34"/>
    </source>
</evidence>
<evidence type="ECO:0000250" key="3">
    <source>
        <dbReference type="UniProtKB" id="Q86YR5"/>
    </source>
</evidence>
<evidence type="ECO:0000255" key="4">
    <source>
        <dbReference type="PROSITE-ProRule" id="PRU00097"/>
    </source>
</evidence>
<evidence type="ECO:0000256" key="5">
    <source>
        <dbReference type="SAM" id="MobiDB-lite"/>
    </source>
</evidence>
<evidence type="ECO:0000269" key="6">
    <source>
    </source>
</evidence>
<evidence type="ECO:0000269" key="7">
    <source>
    </source>
</evidence>
<evidence type="ECO:0000269" key="8">
    <source>
    </source>
</evidence>
<evidence type="ECO:0000269" key="9">
    <source>
    </source>
</evidence>
<evidence type="ECO:0000269" key="10">
    <source>
    </source>
</evidence>
<evidence type="ECO:0000269" key="11">
    <source>
    </source>
</evidence>
<evidence type="ECO:0000269" key="12">
    <source>
    </source>
</evidence>
<evidence type="ECO:0000269" key="13">
    <source>
    </source>
</evidence>
<evidence type="ECO:0000269" key="14">
    <source>
    </source>
</evidence>
<evidence type="ECO:0000269" key="15">
    <source>
    </source>
</evidence>
<evidence type="ECO:0000269" key="16">
    <source>
    </source>
</evidence>
<evidence type="ECO:0000303" key="17">
    <source>
    </source>
</evidence>
<evidence type="ECO:0000303" key="18">
    <source>
    </source>
</evidence>
<evidence type="ECO:0000303" key="19">
    <source ref="2"/>
</evidence>
<evidence type="ECO:0000305" key="20"/>
<evidence type="ECO:0007744" key="21">
    <source>
    </source>
</evidence>
<gene>
    <name type="primary">Gpsm1</name>
    <name type="synonym">Ags3</name>
</gene>
<keyword id="KW-0024">Alternative initiation</keyword>
<keyword id="KW-0025">Alternative splicing</keyword>
<keyword id="KW-1003">Cell membrane</keyword>
<keyword id="KW-0963">Cytoplasm</keyword>
<keyword id="KW-0217">Developmental protein</keyword>
<keyword id="KW-0221">Differentiation</keyword>
<keyword id="KW-0256">Endoplasmic reticulum</keyword>
<keyword id="KW-0333">Golgi apparatus</keyword>
<keyword id="KW-0472">Membrane</keyword>
<keyword id="KW-0488">Methylation</keyword>
<keyword id="KW-0524">Neurogenesis</keyword>
<keyword id="KW-0597">Phosphoprotein</keyword>
<keyword id="KW-1185">Reference proteome</keyword>
<keyword id="KW-0677">Repeat</keyword>
<keyword id="KW-0802">TPR repeat</keyword>
<name>GPSM1_RAT</name>
<dbReference type="EMBL" id="AF107723">
    <property type="protein sequence ID" value="AAF08683.1"/>
    <property type="molecule type" value="mRNA"/>
</dbReference>
<dbReference type="EMBL" id="AY136742">
    <property type="protein sequence ID" value="AAN01268.1"/>
    <property type="molecule type" value="mRNA"/>
</dbReference>
<dbReference type="EMBL" id="BC086535">
    <property type="protein sequence ID" value="AAH86535.1"/>
    <property type="molecule type" value="mRNA"/>
</dbReference>
<dbReference type="EMBL" id="CB583569">
    <property type="status" value="NOT_ANNOTATED_CDS"/>
    <property type="molecule type" value="mRNA"/>
</dbReference>
<dbReference type="RefSeq" id="NP_001138941.1">
    <molecule id="Q9R080-2"/>
    <property type="nucleotide sequence ID" value="NM_001145469.1"/>
</dbReference>
<dbReference type="RefSeq" id="NP_653346.2">
    <property type="nucleotide sequence ID" value="NM_144745.2"/>
</dbReference>
<dbReference type="RefSeq" id="XP_008759842.1">
    <molecule id="Q9R080-3"/>
    <property type="nucleotide sequence ID" value="XM_008761620.4"/>
</dbReference>
<dbReference type="RefSeq" id="XP_063139152.1">
    <molecule id="Q9R080-2"/>
    <property type="nucleotide sequence ID" value="XM_063283082.1"/>
</dbReference>
<dbReference type="SMR" id="Q9R080"/>
<dbReference type="BioGRID" id="251555">
    <property type="interactions" value="2"/>
</dbReference>
<dbReference type="CORUM" id="Q9R080"/>
<dbReference type="FunCoup" id="Q9R080">
    <property type="interactions" value="1274"/>
</dbReference>
<dbReference type="STRING" id="10116.ENSRNOP00000062075"/>
<dbReference type="iPTMnet" id="Q9R080"/>
<dbReference type="PhosphoSitePlus" id="Q9R080"/>
<dbReference type="jPOST" id="Q9R080"/>
<dbReference type="PaxDb" id="10116-ENSRNOP00000062075"/>
<dbReference type="GeneID" id="246254"/>
<dbReference type="KEGG" id="rno:246254"/>
<dbReference type="UCSC" id="RGD:628682">
    <molecule id="Q9R080-1"/>
    <property type="organism name" value="rat"/>
</dbReference>
<dbReference type="AGR" id="RGD:628682"/>
<dbReference type="CTD" id="26086"/>
<dbReference type="RGD" id="628682">
    <property type="gene designation" value="Gpsm1"/>
</dbReference>
<dbReference type="VEuPathDB" id="HostDB:ENSRNOG00000018666"/>
<dbReference type="eggNOG" id="KOG1130">
    <property type="taxonomic scope" value="Eukaryota"/>
</dbReference>
<dbReference type="InParanoid" id="Q9R080"/>
<dbReference type="OrthoDB" id="286233at2759"/>
<dbReference type="PhylomeDB" id="Q9R080"/>
<dbReference type="Reactome" id="R-RNO-418594">
    <property type="pathway name" value="G alpha (i) signalling events"/>
</dbReference>
<dbReference type="PRO" id="PR:Q9R080"/>
<dbReference type="Proteomes" id="UP000002494">
    <property type="component" value="Chromosome 3"/>
</dbReference>
<dbReference type="Bgee" id="ENSRNOG00000018666">
    <property type="expression patterns" value="Expressed in heart and 20 other cell types or tissues"/>
</dbReference>
<dbReference type="ExpressionAtlas" id="Q9R080">
    <property type="expression patterns" value="baseline and differential"/>
</dbReference>
<dbReference type="GO" id="GO:0005938">
    <property type="term" value="C:cell cortex"/>
    <property type="evidence" value="ECO:0000266"/>
    <property type="project" value="RGD"/>
</dbReference>
<dbReference type="GO" id="GO:0005829">
    <property type="term" value="C:cytosol"/>
    <property type="evidence" value="ECO:0007669"/>
    <property type="project" value="UniProtKB-SubCell"/>
</dbReference>
<dbReference type="GO" id="GO:0005789">
    <property type="term" value="C:endoplasmic reticulum membrane"/>
    <property type="evidence" value="ECO:0000266"/>
    <property type="project" value="RGD"/>
</dbReference>
<dbReference type="GO" id="GO:0000139">
    <property type="term" value="C:Golgi membrane"/>
    <property type="evidence" value="ECO:0000266"/>
    <property type="project" value="RGD"/>
</dbReference>
<dbReference type="GO" id="GO:0005886">
    <property type="term" value="C:plasma membrane"/>
    <property type="evidence" value="ECO:0000266"/>
    <property type="project" value="RGD"/>
</dbReference>
<dbReference type="GO" id="GO:0032991">
    <property type="term" value="C:protein-containing complex"/>
    <property type="evidence" value="ECO:0000266"/>
    <property type="project" value="RGD"/>
</dbReference>
<dbReference type="GO" id="GO:0001965">
    <property type="term" value="F:G-protein alpha-subunit binding"/>
    <property type="evidence" value="ECO:0000314"/>
    <property type="project" value="RGD"/>
</dbReference>
<dbReference type="GO" id="GO:0005092">
    <property type="term" value="F:GDP-dissociation inhibitor activity"/>
    <property type="evidence" value="ECO:0000266"/>
    <property type="project" value="RGD"/>
</dbReference>
<dbReference type="GO" id="GO:0030154">
    <property type="term" value="P:cell differentiation"/>
    <property type="evidence" value="ECO:0007669"/>
    <property type="project" value="UniProtKB-KW"/>
</dbReference>
<dbReference type="GO" id="GO:0000132">
    <property type="term" value="P:establishment of mitotic spindle orientation"/>
    <property type="evidence" value="ECO:0000318"/>
    <property type="project" value="GO_Central"/>
</dbReference>
<dbReference type="GO" id="GO:0007399">
    <property type="term" value="P:nervous system development"/>
    <property type="evidence" value="ECO:0007669"/>
    <property type="project" value="UniProtKB-KW"/>
</dbReference>
<dbReference type="GO" id="GO:0016239">
    <property type="term" value="P:positive regulation of macroautophagy"/>
    <property type="evidence" value="ECO:0000266"/>
    <property type="project" value="RGD"/>
</dbReference>
<dbReference type="GO" id="GO:0008277">
    <property type="term" value="P:regulation of G protein-coupled receptor signaling pathway"/>
    <property type="evidence" value="ECO:0000315"/>
    <property type="project" value="RGD"/>
</dbReference>
<dbReference type="FunFam" id="1.25.40.10:FF:000192">
    <property type="entry name" value="G-protein-signaling modulator 1 isoform a"/>
    <property type="match status" value="1"/>
</dbReference>
<dbReference type="FunFam" id="1.25.40.10:FF:000145">
    <property type="entry name" value="G-protein-signaling modulator 1 isoform X2"/>
    <property type="match status" value="1"/>
</dbReference>
<dbReference type="FunFam" id="1.25.40.10:FF:000043">
    <property type="entry name" value="G-protein-signaling modulator 2 isoform X1"/>
    <property type="match status" value="1"/>
</dbReference>
<dbReference type="Gene3D" id="1.25.40.10">
    <property type="entry name" value="Tetratricopeptide repeat domain"/>
    <property type="match status" value="3"/>
</dbReference>
<dbReference type="InterPro" id="IPR003109">
    <property type="entry name" value="GoLoco_motif"/>
</dbReference>
<dbReference type="InterPro" id="IPR052386">
    <property type="entry name" value="GPSM"/>
</dbReference>
<dbReference type="InterPro" id="IPR011990">
    <property type="entry name" value="TPR-like_helical_dom_sf"/>
</dbReference>
<dbReference type="InterPro" id="IPR019734">
    <property type="entry name" value="TPR_rpt"/>
</dbReference>
<dbReference type="PANTHER" id="PTHR45954:SF2">
    <property type="entry name" value="G-PROTEIN-SIGNALING MODULATOR 1"/>
    <property type="match status" value="1"/>
</dbReference>
<dbReference type="PANTHER" id="PTHR45954">
    <property type="entry name" value="LD33695P"/>
    <property type="match status" value="1"/>
</dbReference>
<dbReference type="Pfam" id="PF02188">
    <property type="entry name" value="GoLoco"/>
    <property type="match status" value="4"/>
</dbReference>
<dbReference type="Pfam" id="PF13374">
    <property type="entry name" value="TPR_10"/>
    <property type="match status" value="1"/>
</dbReference>
<dbReference type="Pfam" id="PF13424">
    <property type="entry name" value="TPR_12"/>
    <property type="match status" value="3"/>
</dbReference>
<dbReference type="SMART" id="SM00390">
    <property type="entry name" value="GoLoco"/>
    <property type="match status" value="4"/>
</dbReference>
<dbReference type="SMART" id="SM00028">
    <property type="entry name" value="TPR"/>
    <property type="match status" value="6"/>
</dbReference>
<dbReference type="SUPFAM" id="SSF48452">
    <property type="entry name" value="TPR-like"/>
    <property type="match status" value="2"/>
</dbReference>
<dbReference type="PROSITE" id="PS50877">
    <property type="entry name" value="GOLOCO"/>
    <property type="match status" value="4"/>
</dbReference>
<dbReference type="PROSITE" id="PS50005">
    <property type="entry name" value="TPR"/>
    <property type="match status" value="6"/>
</dbReference>
<dbReference type="PROSITE" id="PS50293">
    <property type="entry name" value="TPR_REGION"/>
    <property type="match status" value="2"/>
</dbReference>
<sequence length="673" mass="74440">MASPAPPAAEELPGPAARRLYSRMEASCLELALEGERLCKAGDFKAGVAFFEAAVQVGTEDLKTLSAIYSQLGNAYFYLKEYARALQFHKHDLLLARTIGDRMGEAKASGNLGNTLKVLGRFDEAIVCCQRHLDIAQEQGDKVGEARALYNIGNVYHAKGKQLSWNAAQDPGHLPPDVRETLHRASEFYERNLSLVKELGDRAAQGRAYGNLGNTHYLLGNFTEATTFHKERLAIAKEFGDKAAERRAYSNLGNAHIFLGRFDVAAEHYKKTLQLSRQIRDQAVEAQACYSLGNTYTLLQDYERAAEYHLRHLVIAQELADRVGEGRACWSLGNAYVSMGSPAQALTFAKKHLQISQEIGDRNGELTARMNIAHLQLALGRLTSPAAAEKPDLAGYEAQGARPKRTQRLSAETWDLLRLPLDREQNGETHHTGDWRGPSRDSLPLPMRSRKYQEGPDAIERRPREGSHSPLDSADVRVQVPRTGIPRAPSSDEECFFDLLSKFQSSRMDDQRCPLEEGQAGAAEATAAPTLEERAAQPSVTASPQTEEFFDLIASSQSRRLDDQRASVGSLPGLRITLNNVGHLRGDGDPQEPGDEFFNMLIKYQSSRIDDQRCPPPDVLPRGPTMPDEDFFSLIQRVQAKRMDEQRVDLAGSPDQEASGLPDPRQQCPPGAS</sequence>
<comment type="function">
    <text evidence="6 7 8 12 13 14 15">Guanine nucleotide dissociation inhibitor (GDI) which functions as a receptor-independent activator of heterotrimeric G-protein signaling. Keeps G(i/o) alpha subunit in its GDP-bound form thus uncoupling heterotrimeric G-proteins signaling from G protein-coupled receptors. Controls spindle orientation and asymmetric cell fate of cerebral cortical progenitors. May also be involved in macroautophagy in intestinal cells. May play a role in drug addiction.</text>
</comment>
<comment type="subunit">
    <text evidence="1 6 7 8 11">Interacts with INSC/inscuteable and FRMPD1 (By similarity). Interacts with GNAI1, GNAI2 and GNAI3 preferentially in their GDP-bound state. May also interact with GNAO1. Interacts with STK11/LKB1 and MACF1.</text>
</comment>
<comment type="subcellular location">
    <subcellularLocation>
        <location>Endoplasmic reticulum membrane</location>
        <topology>Peripheral membrane protein</topology>
        <orientation>Cytoplasmic side</orientation>
    </subcellularLocation>
    <subcellularLocation>
        <location evidence="1">Golgi apparatus membrane</location>
        <topology evidence="1">Peripheral membrane protein</topology>
        <orientation evidence="1">Cytoplasmic side</orientation>
    </subcellularLocation>
    <subcellularLocation>
        <location evidence="1">Cell membrane</location>
        <topology evidence="1">Peripheral membrane protein</topology>
        <orientation evidence="1">Cytoplasmic side</orientation>
    </subcellularLocation>
    <subcellularLocation>
        <location>Cytoplasm</location>
        <location>Cytosol</location>
    </subcellularLocation>
    <text>Isoform 2 is not associated with membranes.</text>
</comment>
<comment type="alternative products">
    <event type="alternative splicing"/>
    <event type="alternative initiation"/>
    <isoform>
        <id>Q9R080-1</id>
        <name>1</name>
        <sequence type="displayed"/>
    </isoform>
    <isoform>
        <id>Q9R080-2</id>
        <name>2</name>
        <name>Short-1</name>
        <sequence type="described" ref="VSP_039034"/>
    </isoform>
    <isoform>
        <id>Q9R080-3</id>
        <name>3</name>
        <name>Short-2</name>
        <sequence type="described" ref="VSP_039035"/>
    </isoform>
    <isoform>
        <id>Q9R080-4</id>
        <name>4</name>
        <name>Long</name>
        <sequence type="described" ref="VSP_039036"/>
    </isoform>
</comment>
<comment type="tissue specificity">
    <text evidence="8 9 10 16">Isoform 4 is specifically expressed in brain by neurons and also detected in testis, liver, kidney, heart and pancreas (at protein level). Highly expressed in cerebellum and subventricular zone-olfactory bulb system. Isoform 2 and isoform 3 are specifically expressed in heart and are also detected in brain.</text>
</comment>
<comment type="developmental stage">
    <text evidence="10">Expression reaches a maximum at postnatal day 7 before to significantly decrease.</text>
</comment>
<comment type="induction">
    <text evidence="14">Up-regulated in prefrontal cortex and core region of nucleus accumbens during late withdrawal from chronic cocaine administration.</text>
</comment>
<comment type="domain">
    <text>The GoLoco domains mediate interaction with G(i/o) alpha. The GoLoco domains are essential for the GDI activity toward G(i/o) alpha.</text>
</comment>
<comment type="PTM">
    <text evidence="1">Phosphorylation regulates interaction with G(i/o) alpha.</text>
</comment>
<comment type="miscellaneous">
    <text>Responsible for altered neurotransmission and altered behavior like drug seeking associated with cocaine addiction. Depletion in prefrontal cortex reverses the behavioral consequences of cocaine addiction while overexpression in drug-naive animals induces addictive behavior upon acute cocaine injection.</text>
</comment>
<comment type="miscellaneous">
    <molecule>Isoform 2</molecule>
    <text evidence="20">Produced by initiation at Met-62 of isoform 3. Mutagenesis of Met-1 into Gly prevents expression of this isoform. Combined mutagenesis of Gln-57, Gln-105 and Gln-129 into Ala alters the function of the GoLoco domains.</text>
</comment>
<comment type="miscellaneous">
    <molecule>Isoform 3</molecule>
    <text evidence="20">Minor isoform. Mutagenesis of Met-1 into Gly leads to expression of isoform 2.</text>
</comment>
<comment type="miscellaneous">
    <molecule>Isoform 4</molecule>
    <text evidence="20">Produced by alternative splicing.</text>
</comment>
<comment type="similarity">
    <text evidence="20">Belongs to the GPSM family.</text>
</comment>
<accession>Q9R080</accession>
<accession>Q8K3E2</accession>